<feature type="chain" id="PRO_0000364563" description="Fructose-1,6-bisphosphatase class 1 1">
    <location>
        <begin position="1"/>
        <end position="332"/>
    </location>
</feature>
<feature type="binding site" evidence="1">
    <location>
        <position position="92"/>
    </location>
    <ligand>
        <name>Mg(2+)</name>
        <dbReference type="ChEBI" id="CHEBI:18420"/>
        <label>1</label>
    </ligand>
</feature>
<feature type="binding site" evidence="1">
    <location>
        <position position="115"/>
    </location>
    <ligand>
        <name>Mg(2+)</name>
        <dbReference type="ChEBI" id="CHEBI:18420"/>
        <label>1</label>
    </ligand>
</feature>
<feature type="binding site" evidence="1">
    <location>
        <position position="115"/>
    </location>
    <ligand>
        <name>Mg(2+)</name>
        <dbReference type="ChEBI" id="CHEBI:18420"/>
        <label>2</label>
    </ligand>
</feature>
<feature type="binding site" evidence="1">
    <location>
        <position position="117"/>
    </location>
    <ligand>
        <name>Mg(2+)</name>
        <dbReference type="ChEBI" id="CHEBI:18420"/>
        <label>1</label>
    </ligand>
</feature>
<feature type="binding site" evidence="1">
    <location>
        <begin position="118"/>
        <end position="121"/>
    </location>
    <ligand>
        <name>substrate</name>
    </ligand>
</feature>
<feature type="binding site" evidence="1">
    <location>
        <position position="118"/>
    </location>
    <ligand>
        <name>Mg(2+)</name>
        <dbReference type="ChEBI" id="CHEBI:18420"/>
        <label>2</label>
    </ligand>
</feature>
<feature type="binding site" evidence="1">
    <location>
        <position position="211"/>
    </location>
    <ligand>
        <name>substrate</name>
    </ligand>
</feature>
<feature type="binding site" evidence="1">
    <location>
        <position position="244"/>
    </location>
    <ligand>
        <name>substrate</name>
    </ligand>
</feature>
<feature type="binding site" evidence="1">
    <location>
        <begin position="262"/>
        <end position="264"/>
    </location>
    <ligand>
        <name>substrate</name>
    </ligand>
</feature>
<feature type="binding site" evidence="1">
    <location>
        <position position="274"/>
    </location>
    <ligand>
        <name>substrate</name>
    </ligand>
</feature>
<feature type="binding site" evidence="1">
    <location>
        <position position="280"/>
    </location>
    <ligand>
        <name>Mg(2+)</name>
        <dbReference type="ChEBI" id="CHEBI:18420"/>
        <label>2</label>
    </ligand>
</feature>
<reference key="1">
    <citation type="journal article" date="2006" name="Environ. Microbiol.">
        <title>Whole genome analysis of the marine Bacteroidetes'Gramella forsetii' reveals adaptations to degradation of polymeric organic matter.</title>
        <authorList>
            <person name="Bauer M."/>
            <person name="Kube M."/>
            <person name="Teeling H."/>
            <person name="Richter M."/>
            <person name="Lombardot T."/>
            <person name="Allers E."/>
            <person name="Wuerdemann C.A."/>
            <person name="Quast C."/>
            <person name="Kuhl H."/>
            <person name="Knaust F."/>
            <person name="Woebken D."/>
            <person name="Bischof K."/>
            <person name="Mussmann M."/>
            <person name="Choudhuri J.V."/>
            <person name="Meyer F."/>
            <person name="Reinhardt R."/>
            <person name="Amann R.I."/>
            <person name="Gloeckner F.O."/>
        </authorList>
    </citation>
    <scope>NUCLEOTIDE SEQUENCE [LARGE SCALE GENOMIC DNA]</scope>
    <source>
        <strain>DSM 17595 / CGMCC 1.15422 / KT0803</strain>
    </source>
</reference>
<gene>
    <name evidence="1" type="primary">fbp1</name>
    <name type="ordered locus">GFO_1163</name>
</gene>
<organism>
    <name type="scientific">Christiangramia forsetii (strain DSM 17595 / CGMCC 1.15422 / KT0803)</name>
    <name type="common">Gramella forsetii</name>
    <dbReference type="NCBI Taxonomy" id="411154"/>
    <lineage>
        <taxon>Bacteria</taxon>
        <taxon>Pseudomonadati</taxon>
        <taxon>Bacteroidota</taxon>
        <taxon>Flavobacteriia</taxon>
        <taxon>Flavobacteriales</taxon>
        <taxon>Flavobacteriaceae</taxon>
        <taxon>Christiangramia</taxon>
    </lineage>
</organism>
<sequence length="332" mass="36972">MERHTTLGEFIIENQKDFPYAKGELSALLSSIRLAGKVVNQQINKAGLAEILGKAGKENVQGESQAKLDVLANEIFVSTLRNRGEICGLASEELEDYLVFDEEMHKNAEYIVLIDPLDGSSNIDVDITVGTIFSIYRRISKKGTPATLEDFLQPGINQVAAGYLIYGTSTILVYTTGNGVNGFTFDPGIGSFFLSHSDIKFPKKGNTYSVNEGNYVHFPQGIKKYIKWVQELNEEENRPFTSRYTGSLVADFHRNMLLGGIYLYPQGTTAPKGKLRLLYECNPMAFLAEQAGGKATDGSRRIMELQPQELHERAPFICGNKEMVEKAEEFMQ</sequence>
<accession>A0M0J2</accession>
<name>F16A1_CHRFK</name>
<dbReference type="EC" id="3.1.3.11" evidence="1"/>
<dbReference type="EMBL" id="CU207366">
    <property type="protein sequence ID" value="CAL66137.1"/>
    <property type="molecule type" value="Genomic_DNA"/>
</dbReference>
<dbReference type="RefSeq" id="WP_011709056.1">
    <property type="nucleotide sequence ID" value="NC_008571.1"/>
</dbReference>
<dbReference type="SMR" id="A0M0J2"/>
<dbReference type="STRING" id="411154.GFO_1163"/>
<dbReference type="KEGG" id="gfo:GFO_1163"/>
<dbReference type="eggNOG" id="COG0158">
    <property type="taxonomic scope" value="Bacteria"/>
</dbReference>
<dbReference type="HOGENOM" id="CLU_039977_2_2_10"/>
<dbReference type="OrthoDB" id="9806756at2"/>
<dbReference type="UniPathway" id="UPA00138"/>
<dbReference type="Proteomes" id="UP000000755">
    <property type="component" value="Chromosome"/>
</dbReference>
<dbReference type="GO" id="GO:0005829">
    <property type="term" value="C:cytosol"/>
    <property type="evidence" value="ECO:0007669"/>
    <property type="project" value="TreeGrafter"/>
</dbReference>
<dbReference type="GO" id="GO:0042132">
    <property type="term" value="F:fructose 1,6-bisphosphate 1-phosphatase activity"/>
    <property type="evidence" value="ECO:0007669"/>
    <property type="project" value="UniProtKB-UniRule"/>
</dbReference>
<dbReference type="GO" id="GO:0000287">
    <property type="term" value="F:magnesium ion binding"/>
    <property type="evidence" value="ECO:0007669"/>
    <property type="project" value="UniProtKB-UniRule"/>
</dbReference>
<dbReference type="GO" id="GO:0030388">
    <property type="term" value="P:fructose 1,6-bisphosphate metabolic process"/>
    <property type="evidence" value="ECO:0007669"/>
    <property type="project" value="TreeGrafter"/>
</dbReference>
<dbReference type="GO" id="GO:0006002">
    <property type="term" value="P:fructose 6-phosphate metabolic process"/>
    <property type="evidence" value="ECO:0007669"/>
    <property type="project" value="TreeGrafter"/>
</dbReference>
<dbReference type="GO" id="GO:0006000">
    <property type="term" value="P:fructose metabolic process"/>
    <property type="evidence" value="ECO:0007669"/>
    <property type="project" value="TreeGrafter"/>
</dbReference>
<dbReference type="GO" id="GO:0006094">
    <property type="term" value="P:gluconeogenesis"/>
    <property type="evidence" value="ECO:0007669"/>
    <property type="project" value="UniProtKB-UniRule"/>
</dbReference>
<dbReference type="GO" id="GO:0005986">
    <property type="term" value="P:sucrose biosynthetic process"/>
    <property type="evidence" value="ECO:0007669"/>
    <property type="project" value="TreeGrafter"/>
</dbReference>
<dbReference type="CDD" id="cd00354">
    <property type="entry name" value="FBPase"/>
    <property type="match status" value="1"/>
</dbReference>
<dbReference type="FunFam" id="3.30.540.10:FF:000002">
    <property type="entry name" value="Fructose-1,6-bisphosphatase class 1"/>
    <property type="match status" value="1"/>
</dbReference>
<dbReference type="FunFam" id="3.40.190.80:FF:000001">
    <property type="entry name" value="Fructose-1,6-bisphosphatase class 1"/>
    <property type="match status" value="1"/>
</dbReference>
<dbReference type="Gene3D" id="3.40.190.80">
    <property type="match status" value="1"/>
</dbReference>
<dbReference type="Gene3D" id="3.30.540.10">
    <property type="entry name" value="Fructose-1,6-Bisphosphatase, subunit A, domain 1"/>
    <property type="match status" value="1"/>
</dbReference>
<dbReference type="HAMAP" id="MF_01855">
    <property type="entry name" value="FBPase_class1"/>
    <property type="match status" value="1"/>
</dbReference>
<dbReference type="InterPro" id="IPR044015">
    <property type="entry name" value="FBPase_C_dom"/>
</dbReference>
<dbReference type="InterPro" id="IPR000146">
    <property type="entry name" value="FBPase_class-1"/>
</dbReference>
<dbReference type="InterPro" id="IPR033391">
    <property type="entry name" value="FBPase_N"/>
</dbReference>
<dbReference type="InterPro" id="IPR028343">
    <property type="entry name" value="FBPtase"/>
</dbReference>
<dbReference type="InterPro" id="IPR020548">
    <property type="entry name" value="Fructose_bisphosphatase_AS"/>
</dbReference>
<dbReference type="NCBIfam" id="NF006778">
    <property type="entry name" value="PRK09293.1-1"/>
    <property type="match status" value="1"/>
</dbReference>
<dbReference type="PANTHER" id="PTHR11556">
    <property type="entry name" value="FRUCTOSE-1,6-BISPHOSPHATASE-RELATED"/>
    <property type="match status" value="1"/>
</dbReference>
<dbReference type="PANTHER" id="PTHR11556:SF35">
    <property type="entry name" value="SEDOHEPTULOSE-1,7-BISPHOSPHATASE, CHLOROPLASTIC"/>
    <property type="match status" value="1"/>
</dbReference>
<dbReference type="Pfam" id="PF00316">
    <property type="entry name" value="FBPase"/>
    <property type="match status" value="1"/>
</dbReference>
<dbReference type="Pfam" id="PF18913">
    <property type="entry name" value="FBPase_C"/>
    <property type="match status" value="1"/>
</dbReference>
<dbReference type="PIRSF" id="PIRSF500210">
    <property type="entry name" value="FBPtase"/>
    <property type="match status" value="1"/>
</dbReference>
<dbReference type="PIRSF" id="PIRSF000904">
    <property type="entry name" value="FBPtase_SBPase"/>
    <property type="match status" value="1"/>
</dbReference>
<dbReference type="PRINTS" id="PR00115">
    <property type="entry name" value="F16BPHPHTASE"/>
</dbReference>
<dbReference type="SUPFAM" id="SSF56655">
    <property type="entry name" value="Carbohydrate phosphatase"/>
    <property type="match status" value="1"/>
</dbReference>
<dbReference type="PROSITE" id="PS00124">
    <property type="entry name" value="FBPASE"/>
    <property type="match status" value="1"/>
</dbReference>
<protein>
    <recommendedName>
        <fullName evidence="1">Fructose-1,6-bisphosphatase class 1 1</fullName>
        <shortName evidence="1">FBPase class 1 1</shortName>
        <ecNumber evidence="1">3.1.3.11</ecNumber>
    </recommendedName>
    <alternativeName>
        <fullName evidence="1">D-fructose-1,6-bisphosphate 1-phosphohydrolase class 1 1</fullName>
    </alternativeName>
</protein>
<keyword id="KW-0119">Carbohydrate metabolism</keyword>
<keyword id="KW-0963">Cytoplasm</keyword>
<keyword id="KW-0378">Hydrolase</keyword>
<keyword id="KW-0460">Magnesium</keyword>
<keyword id="KW-0479">Metal-binding</keyword>
<proteinExistence type="inferred from homology"/>
<comment type="catalytic activity">
    <reaction evidence="1">
        <text>beta-D-fructose 1,6-bisphosphate + H2O = beta-D-fructose 6-phosphate + phosphate</text>
        <dbReference type="Rhea" id="RHEA:11064"/>
        <dbReference type="ChEBI" id="CHEBI:15377"/>
        <dbReference type="ChEBI" id="CHEBI:32966"/>
        <dbReference type="ChEBI" id="CHEBI:43474"/>
        <dbReference type="ChEBI" id="CHEBI:57634"/>
        <dbReference type="EC" id="3.1.3.11"/>
    </reaction>
</comment>
<comment type="cofactor">
    <cofactor evidence="1">
        <name>Mg(2+)</name>
        <dbReference type="ChEBI" id="CHEBI:18420"/>
    </cofactor>
    <text evidence="1">Binds 2 magnesium ions per subunit.</text>
</comment>
<comment type="pathway">
    <text evidence="1">Carbohydrate biosynthesis; gluconeogenesis.</text>
</comment>
<comment type="subunit">
    <text evidence="1">Homotetramer.</text>
</comment>
<comment type="subcellular location">
    <subcellularLocation>
        <location evidence="1">Cytoplasm</location>
    </subcellularLocation>
</comment>
<comment type="similarity">
    <text evidence="1">Belongs to the FBPase class 1 family.</text>
</comment>
<evidence type="ECO:0000255" key="1">
    <source>
        <dbReference type="HAMAP-Rule" id="MF_01855"/>
    </source>
</evidence>